<evidence type="ECO:0000255" key="1">
    <source>
        <dbReference type="HAMAP-Rule" id="MF_00151"/>
    </source>
</evidence>
<keyword id="KW-0067">ATP-binding</keyword>
<keyword id="KW-0173">Coenzyme A biosynthesis</keyword>
<keyword id="KW-0963">Cytoplasm</keyword>
<keyword id="KW-0460">Magnesium</keyword>
<keyword id="KW-0547">Nucleotide-binding</keyword>
<keyword id="KW-0548">Nucleotidyltransferase</keyword>
<keyword id="KW-1185">Reference proteome</keyword>
<keyword id="KW-0808">Transferase</keyword>
<protein>
    <recommendedName>
        <fullName evidence="1">Phosphopantetheine adenylyltransferase</fullName>
        <ecNumber evidence="1">2.7.7.3</ecNumber>
    </recommendedName>
    <alternativeName>
        <fullName evidence="1">Dephospho-CoA pyrophosphorylase</fullName>
    </alternativeName>
    <alternativeName>
        <fullName evidence="1">Pantetheine-phosphate adenylyltransferase</fullName>
        <shortName evidence="1">PPAT</shortName>
    </alternativeName>
</protein>
<organism>
    <name type="scientific">Streptomyces coelicolor (strain ATCC BAA-471 / A3(2) / M145)</name>
    <dbReference type="NCBI Taxonomy" id="100226"/>
    <lineage>
        <taxon>Bacteria</taxon>
        <taxon>Bacillati</taxon>
        <taxon>Actinomycetota</taxon>
        <taxon>Actinomycetes</taxon>
        <taxon>Kitasatosporales</taxon>
        <taxon>Streptomycetaceae</taxon>
        <taxon>Streptomyces</taxon>
        <taxon>Streptomyces albidoflavus group</taxon>
    </lineage>
</organism>
<dbReference type="EC" id="2.7.7.3" evidence="1"/>
<dbReference type="EMBL" id="AL939124">
    <property type="protein sequence ID" value="CAA22411.1"/>
    <property type="molecule type" value="Genomic_DNA"/>
</dbReference>
<dbReference type="PIR" id="T35652">
    <property type="entry name" value="T35652"/>
</dbReference>
<dbReference type="RefSeq" id="NP_629703.1">
    <property type="nucleotide sequence ID" value="NC_003888.3"/>
</dbReference>
<dbReference type="RefSeq" id="WP_003973426.1">
    <property type="nucleotide sequence ID" value="NZ_VNID01000011.1"/>
</dbReference>
<dbReference type="SMR" id="Q9ZBR1"/>
<dbReference type="FunCoup" id="Q9ZBR1">
    <property type="interactions" value="196"/>
</dbReference>
<dbReference type="STRING" id="100226.gene:17763226"/>
<dbReference type="PaxDb" id="100226-SCO5568"/>
<dbReference type="GeneID" id="96655154"/>
<dbReference type="KEGG" id="sco:SCO5568"/>
<dbReference type="PATRIC" id="fig|100226.15.peg.5657"/>
<dbReference type="eggNOG" id="COG0669">
    <property type="taxonomic scope" value="Bacteria"/>
</dbReference>
<dbReference type="HOGENOM" id="CLU_100149_0_1_11"/>
<dbReference type="InParanoid" id="Q9ZBR1"/>
<dbReference type="OrthoDB" id="9806661at2"/>
<dbReference type="PhylomeDB" id="Q9ZBR1"/>
<dbReference type="UniPathway" id="UPA00241">
    <property type="reaction ID" value="UER00355"/>
</dbReference>
<dbReference type="Proteomes" id="UP000001973">
    <property type="component" value="Chromosome"/>
</dbReference>
<dbReference type="GO" id="GO:0005737">
    <property type="term" value="C:cytoplasm"/>
    <property type="evidence" value="ECO:0007669"/>
    <property type="project" value="UniProtKB-SubCell"/>
</dbReference>
<dbReference type="GO" id="GO:0005524">
    <property type="term" value="F:ATP binding"/>
    <property type="evidence" value="ECO:0007669"/>
    <property type="project" value="UniProtKB-KW"/>
</dbReference>
<dbReference type="GO" id="GO:0004595">
    <property type="term" value="F:pantetheine-phosphate adenylyltransferase activity"/>
    <property type="evidence" value="ECO:0000318"/>
    <property type="project" value="GO_Central"/>
</dbReference>
<dbReference type="GO" id="GO:0015937">
    <property type="term" value="P:coenzyme A biosynthetic process"/>
    <property type="evidence" value="ECO:0000318"/>
    <property type="project" value="GO_Central"/>
</dbReference>
<dbReference type="CDD" id="cd02163">
    <property type="entry name" value="PPAT"/>
    <property type="match status" value="1"/>
</dbReference>
<dbReference type="Gene3D" id="3.40.50.620">
    <property type="entry name" value="HUPs"/>
    <property type="match status" value="1"/>
</dbReference>
<dbReference type="HAMAP" id="MF_00151">
    <property type="entry name" value="PPAT_bact"/>
    <property type="match status" value="1"/>
</dbReference>
<dbReference type="InterPro" id="IPR004821">
    <property type="entry name" value="Cyt_trans-like"/>
</dbReference>
<dbReference type="InterPro" id="IPR001980">
    <property type="entry name" value="PPAT"/>
</dbReference>
<dbReference type="InterPro" id="IPR014729">
    <property type="entry name" value="Rossmann-like_a/b/a_fold"/>
</dbReference>
<dbReference type="NCBIfam" id="TIGR01510">
    <property type="entry name" value="coaD_prev_kdtB"/>
    <property type="match status" value="1"/>
</dbReference>
<dbReference type="NCBIfam" id="TIGR00125">
    <property type="entry name" value="cyt_tran_rel"/>
    <property type="match status" value="1"/>
</dbReference>
<dbReference type="PANTHER" id="PTHR21342">
    <property type="entry name" value="PHOSPHOPANTETHEINE ADENYLYLTRANSFERASE"/>
    <property type="match status" value="1"/>
</dbReference>
<dbReference type="PANTHER" id="PTHR21342:SF1">
    <property type="entry name" value="PHOSPHOPANTETHEINE ADENYLYLTRANSFERASE"/>
    <property type="match status" value="1"/>
</dbReference>
<dbReference type="Pfam" id="PF01467">
    <property type="entry name" value="CTP_transf_like"/>
    <property type="match status" value="1"/>
</dbReference>
<dbReference type="PRINTS" id="PR01020">
    <property type="entry name" value="LPSBIOSNTHSS"/>
</dbReference>
<dbReference type="SUPFAM" id="SSF52374">
    <property type="entry name" value="Nucleotidylyl transferase"/>
    <property type="match status" value="1"/>
</dbReference>
<feature type="chain" id="PRO_0000156282" description="Phosphopantetheine adenylyltransferase">
    <location>
        <begin position="1"/>
        <end position="159"/>
    </location>
</feature>
<feature type="binding site" evidence="1">
    <location>
        <begin position="9"/>
        <end position="10"/>
    </location>
    <ligand>
        <name>ATP</name>
        <dbReference type="ChEBI" id="CHEBI:30616"/>
    </ligand>
</feature>
<feature type="binding site" evidence="1">
    <location>
        <position position="9"/>
    </location>
    <ligand>
        <name>substrate</name>
    </ligand>
</feature>
<feature type="binding site" evidence="1">
    <location>
        <position position="17"/>
    </location>
    <ligand>
        <name>ATP</name>
        <dbReference type="ChEBI" id="CHEBI:30616"/>
    </ligand>
</feature>
<feature type="binding site" evidence="1">
    <location>
        <position position="41"/>
    </location>
    <ligand>
        <name>substrate</name>
    </ligand>
</feature>
<feature type="binding site" evidence="1">
    <location>
        <position position="73"/>
    </location>
    <ligand>
        <name>substrate</name>
    </ligand>
</feature>
<feature type="binding site" evidence="1">
    <location>
        <position position="87"/>
    </location>
    <ligand>
        <name>substrate</name>
    </ligand>
</feature>
<feature type="binding site" evidence="1">
    <location>
        <begin position="88"/>
        <end position="90"/>
    </location>
    <ligand>
        <name>ATP</name>
        <dbReference type="ChEBI" id="CHEBI:30616"/>
    </ligand>
</feature>
<feature type="binding site" evidence="1">
    <location>
        <position position="98"/>
    </location>
    <ligand>
        <name>ATP</name>
        <dbReference type="ChEBI" id="CHEBI:30616"/>
    </ligand>
</feature>
<feature type="binding site" evidence="1">
    <location>
        <begin position="122"/>
        <end position="128"/>
    </location>
    <ligand>
        <name>ATP</name>
        <dbReference type="ChEBI" id="CHEBI:30616"/>
    </ligand>
</feature>
<feature type="site" description="Transition state stabilizer" evidence="1">
    <location>
        <position position="17"/>
    </location>
</feature>
<name>COAD_STRCO</name>
<reference key="1">
    <citation type="journal article" date="2002" name="Nature">
        <title>Complete genome sequence of the model actinomycete Streptomyces coelicolor A3(2).</title>
        <authorList>
            <person name="Bentley S.D."/>
            <person name="Chater K.F."/>
            <person name="Cerdeno-Tarraga A.-M."/>
            <person name="Challis G.L."/>
            <person name="Thomson N.R."/>
            <person name="James K.D."/>
            <person name="Harris D.E."/>
            <person name="Quail M.A."/>
            <person name="Kieser H."/>
            <person name="Harper D."/>
            <person name="Bateman A."/>
            <person name="Brown S."/>
            <person name="Chandra G."/>
            <person name="Chen C.W."/>
            <person name="Collins M."/>
            <person name="Cronin A."/>
            <person name="Fraser A."/>
            <person name="Goble A."/>
            <person name="Hidalgo J."/>
            <person name="Hornsby T."/>
            <person name="Howarth S."/>
            <person name="Huang C.-H."/>
            <person name="Kieser T."/>
            <person name="Larke L."/>
            <person name="Murphy L.D."/>
            <person name="Oliver K."/>
            <person name="O'Neil S."/>
            <person name="Rabbinowitsch E."/>
            <person name="Rajandream M.A."/>
            <person name="Rutherford K.M."/>
            <person name="Rutter S."/>
            <person name="Seeger K."/>
            <person name="Saunders D."/>
            <person name="Sharp S."/>
            <person name="Squares R."/>
            <person name="Squares S."/>
            <person name="Taylor K."/>
            <person name="Warren T."/>
            <person name="Wietzorrek A."/>
            <person name="Woodward J.R."/>
            <person name="Barrell B.G."/>
            <person name="Parkhill J."/>
            <person name="Hopwood D.A."/>
        </authorList>
    </citation>
    <scope>NUCLEOTIDE SEQUENCE [LARGE SCALE GENOMIC DNA]</scope>
    <source>
        <strain>ATCC BAA-471 / A3(2) / M145</strain>
    </source>
</reference>
<sequence length="159" mass="17813">MRRAVCPGSFDPITNGHLDIIARASSLYDEVYVAVMINQAKKGLFEIEERIDLIRRVTAEYGNVRVESFHGLLVDFCKQREIPAIVKGLRAVSDFDYELQMAQMNNGLSGVETLFIPTNPTYSFLSSSLVKEVATWGGDVAHLVPPLVLEALTERLRNR</sequence>
<accession>Q9ZBR1</accession>
<gene>
    <name evidence="1" type="primary">coaD</name>
    <name type="synonym">kdtB</name>
    <name type="ordered locus">SCO5568</name>
    <name type="ORF">SC7A1.12</name>
</gene>
<comment type="function">
    <text evidence="1">Reversibly transfers an adenylyl group from ATP to 4'-phosphopantetheine, yielding dephospho-CoA (dPCoA) and pyrophosphate.</text>
</comment>
<comment type="catalytic activity">
    <reaction evidence="1">
        <text>(R)-4'-phosphopantetheine + ATP + H(+) = 3'-dephospho-CoA + diphosphate</text>
        <dbReference type="Rhea" id="RHEA:19801"/>
        <dbReference type="ChEBI" id="CHEBI:15378"/>
        <dbReference type="ChEBI" id="CHEBI:30616"/>
        <dbReference type="ChEBI" id="CHEBI:33019"/>
        <dbReference type="ChEBI" id="CHEBI:57328"/>
        <dbReference type="ChEBI" id="CHEBI:61723"/>
        <dbReference type="EC" id="2.7.7.3"/>
    </reaction>
</comment>
<comment type="cofactor">
    <cofactor evidence="1">
        <name>Mg(2+)</name>
        <dbReference type="ChEBI" id="CHEBI:18420"/>
    </cofactor>
</comment>
<comment type="pathway">
    <text evidence="1">Cofactor biosynthesis; coenzyme A biosynthesis; CoA from (R)-pantothenate: step 4/5.</text>
</comment>
<comment type="subunit">
    <text evidence="1">Homohexamer.</text>
</comment>
<comment type="subcellular location">
    <subcellularLocation>
        <location evidence="1">Cytoplasm</location>
    </subcellularLocation>
</comment>
<comment type="similarity">
    <text evidence="1">Belongs to the bacterial CoaD family.</text>
</comment>
<proteinExistence type="inferred from homology"/>